<feature type="chain" id="PRO_1000052890" description="Large ribosomal subunit protein bL25">
    <location>
        <begin position="1"/>
        <end position="210"/>
    </location>
</feature>
<feature type="region of interest" description="Disordered" evidence="2">
    <location>
        <begin position="179"/>
        <end position="210"/>
    </location>
</feature>
<feature type="compositionally biased region" description="Basic and acidic residues" evidence="2">
    <location>
        <begin position="201"/>
        <end position="210"/>
    </location>
</feature>
<keyword id="KW-0687">Ribonucleoprotein</keyword>
<keyword id="KW-0689">Ribosomal protein</keyword>
<keyword id="KW-0694">RNA-binding</keyword>
<keyword id="KW-0699">rRNA-binding</keyword>
<accession>A4IJC8</accession>
<evidence type="ECO:0000255" key="1">
    <source>
        <dbReference type="HAMAP-Rule" id="MF_01334"/>
    </source>
</evidence>
<evidence type="ECO:0000256" key="2">
    <source>
        <dbReference type="SAM" id="MobiDB-lite"/>
    </source>
</evidence>
<evidence type="ECO:0000305" key="3"/>
<sequence length="210" mass="22756">MAIVLGAKERKDKKHSTLRRIRSQGGIPAVLYGKKVDNKMISISAADLEKALREGGRHSLVTLKVDGEDYSVLLREVQRDPLRGELLHADFQAVDMSAEVDVDVEVRLVGEAPGVKDGGVLQQNLHELSIRVLPANIPPAIEVDISGLQVGDVITVGDVQTGGTFEINHEPSEVIATILPPQQEEEIHSGEQQEPGQPEAEEGRETTPEG</sequence>
<comment type="function">
    <text evidence="1">This is one of the proteins that binds to the 5S RNA in the ribosome where it forms part of the central protuberance.</text>
</comment>
<comment type="subunit">
    <text evidence="1">Part of the 50S ribosomal subunit; part of the 5S rRNA/L5/L18/L25 subcomplex. Contacts the 5S rRNA. Binds to the 5S rRNA independently of L5 and L18.</text>
</comment>
<comment type="similarity">
    <text evidence="1">Belongs to the bacterial ribosomal protein bL25 family. CTC subfamily.</text>
</comment>
<gene>
    <name evidence="1" type="primary">rplY</name>
    <name evidence="1" type="synonym">ctc</name>
    <name type="ordered locus">GTNG_0045</name>
</gene>
<organism>
    <name type="scientific">Geobacillus thermodenitrificans (strain NG80-2)</name>
    <dbReference type="NCBI Taxonomy" id="420246"/>
    <lineage>
        <taxon>Bacteria</taxon>
        <taxon>Bacillati</taxon>
        <taxon>Bacillota</taxon>
        <taxon>Bacilli</taxon>
        <taxon>Bacillales</taxon>
        <taxon>Anoxybacillaceae</taxon>
        <taxon>Geobacillus</taxon>
    </lineage>
</organism>
<proteinExistence type="inferred from homology"/>
<protein>
    <recommendedName>
        <fullName evidence="1">Large ribosomal subunit protein bL25</fullName>
    </recommendedName>
    <alternativeName>
        <fullName evidence="3">50S ribosomal protein L25</fullName>
    </alternativeName>
    <alternativeName>
        <fullName evidence="1">General stress protein CTC</fullName>
    </alternativeName>
</protein>
<name>RL25_GEOTN</name>
<reference key="1">
    <citation type="journal article" date="2007" name="Proc. Natl. Acad. Sci. U.S.A.">
        <title>Genome and proteome of long-chain alkane degrading Geobacillus thermodenitrificans NG80-2 isolated from a deep-subsurface oil reservoir.</title>
        <authorList>
            <person name="Feng L."/>
            <person name="Wang W."/>
            <person name="Cheng J."/>
            <person name="Ren Y."/>
            <person name="Zhao G."/>
            <person name="Gao C."/>
            <person name="Tang Y."/>
            <person name="Liu X."/>
            <person name="Han W."/>
            <person name="Peng X."/>
            <person name="Liu R."/>
            <person name="Wang L."/>
        </authorList>
    </citation>
    <scope>NUCLEOTIDE SEQUENCE [LARGE SCALE GENOMIC DNA]</scope>
    <source>
        <strain>NG80-2</strain>
    </source>
</reference>
<dbReference type="EMBL" id="CP000557">
    <property type="protein sequence ID" value="ABO65432.1"/>
    <property type="molecule type" value="Genomic_DNA"/>
</dbReference>
<dbReference type="RefSeq" id="WP_011886608.1">
    <property type="nucleotide sequence ID" value="NC_009328.1"/>
</dbReference>
<dbReference type="SMR" id="A4IJC8"/>
<dbReference type="GeneID" id="87622401"/>
<dbReference type="KEGG" id="gtn:GTNG_0045"/>
<dbReference type="eggNOG" id="COG1825">
    <property type="taxonomic scope" value="Bacteria"/>
</dbReference>
<dbReference type="HOGENOM" id="CLU_075939_2_0_9"/>
<dbReference type="Proteomes" id="UP000001578">
    <property type="component" value="Chromosome"/>
</dbReference>
<dbReference type="GO" id="GO:0022625">
    <property type="term" value="C:cytosolic large ribosomal subunit"/>
    <property type="evidence" value="ECO:0007669"/>
    <property type="project" value="TreeGrafter"/>
</dbReference>
<dbReference type="GO" id="GO:0008097">
    <property type="term" value="F:5S rRNA binding"/>
    <property type="evidence" value="ECO:0007669"/>
    <property type="project" value="InterPro"/>
</dbReference>
<dbReference type="GO" id="GO:0003735">
    <property type="term" value="F:structural constituent of ribosome"/>
    <property type="evidence" value="ECO:0007669"/>
    <property type="project" value="InterPro"/>
</dbReference>
<dbReference type="GO" id="GO:0006412">
    <property type="term" value="P:translation"/>
    <property type="evidence" value="ECO:0007669"/>
    <property type="project" value="UniProtKB-UniRule"/>
</dbReference>
<dbReference type="CDD" id="cd00495">
    <property type="entry name" value="Ribosomal_L25_TL5_CTC"/>
    <property type="match status" value="1"/>
</dbReference>
<dbReference type="Gene3D" id="2.170.120.20">
    <property type="entry name" value="Ribosomal protein L25, beta domain"/>
    <property type="match status" value="1"/>
</dbReference>
<dbReference type="Gene3D" id="2.40.240.10">
    <property type="entry name" value="Ribosomal Protein L25, Chain P"/>
    <property type="match status" value="1"/>
</dbReference>
<dbReference type="HAMAP" id="MF_01334">
    <property type="entry name" value="Ribosomal_bL25_CTC"/>
    <property type="match status" value="1"/>
</dbReference>
<dbReference type="InterPro" id="IPR020056">
    <property type="entry name" value="Rbsml_bL25/Gln-tRNA_synth_N"/>
</dbReference>
<dbReference type="InterPro" id="IPR011035">
    <property type="entry name" value="Ribosomal_bL25/Gln-tRNA_synth"/>
</dbReference>
<dbReference type="InterPro" id="IPR020057">
    <property type="entry name" value="Ribosomal_bL25_b-dom"/>
</dbReference>
<dbReference type="InterPro" id="IPR037121">
    <property type="entry name" value="Ribosomal_bL25_C"/>
</dbReference>
<dbReference type="InterPro" id="IPR001021">
    <property type="entry name" value="Ribosomal_bL25_long"/>
</dbReference>
<dbReference type="InterPro" id="IPR029751">
    <property type="entry name" value="Ribosomal_L25_dom"/>
</dbReference>
<dbReference type="InterPro" id="IPR020930">
    <property type="entry name" value="Ribosomal_uL5_bac-type"/>
</dbReference>
<dbReference type="NCBIfam" id="TIGR00731">
    <property type="entry name" value="bL25_bact_ctc"/>
    <property type="match status" value="1"/>
</dbReference>
<dbReference type="NCBIfam" id="NF004133">
    <property type="entry name" value="PRK05618.2-4"/>
    <property type="match status" value="1"/>
</dbReference>
<dbReference type="PANTHER" id="PTHR33284">
    <property type="entry name" value="RIBOSOMAL PROTEIN L25/GLN-TRNA SYNTHETASE, ANTI-CODON-BINDING DOMAIN-CONTAINING PROTEIN"/>
    <property type="match status" value="1"/>
</dbReference>
<dbReference type="PANTHER" id="PTHR33284:SF1">
    <property type="entry name" value="RIBOSOMAL PROTEIN L25_GLN-TRNA SYNTHETASE, ANTI-CODON-BINDING DOMAIN-CONTAINING PROTEIN"/>
    <property type="match status" value="1"/>
</dbReference>
<dbReference type="Pfam" id="PF01386">
    <property type="entry name" value="Ribosomal_L25p"/>
    <property type="match status" value="1"/>
</dbReference>
<dbReference type="Pfam" id="PF14693">
    <property type="entry name" value="Ribosomal_TL5_C"/>
    <property type="match status" value="1"/>
</dbReference>
<dbReference type="SUPFAM" id="SSF50715">
    <property type="entry name" value="Ribosomal protein L25-like"/>
    <property type="match status" value="1"/>
</dbReference>